<evidence type="ECO:0000250" key="1"/>
<evidence type="ECO:0000255" key="2">
    <source>
        <dbReference type="PROSITE-ProRule" id="PRU00698"/>
    </source>
</evidence>
<evidence type="ECO:0000256" key="3">
    <source>
        <dbReference type="SAM" id="MobiDB-lite"/>
    </source>
</evidence>
<evidence type="ECO:0000305" key="4"/>
<reference key="1">
    <citation type="journal article" date="2005" name="Science">
        <title>The genome of the basidiomycetous yeast and human pathogen Cryptococcus neoformans.</title>
        <authorList>
            <person name="Loftus B.J."/>
            <person name="Fung E."/>
            <person name="Roncaglia P."/>
            <person name="Rowley D."/>
            <person name="Amedeo P."/>
            <person name="Bruno D."/>
            <person name="Vamathevan J."/>
            <person name="Miranda M."/>
            <person name="Anderson I.J."/>
            <person name="Fraser J.A."/>
            <person name="Allen J.E."/>
            <person name="Bosdet I.E."/>
            <person name="Brent M.R."/>
            <person name="Chiu R."/>
            <person name="Doering T.L."/>
            <person name="Donlin M.J."/>
            <person name="D'Souza C.A."/>
            <person name="Fox D.S."/>
            <person name="Grinberg V."/>
            <person name="Fu J."/>
            <person name="Fukushima M."/>
            <person name="Haas B.J."/>
            <person name="Huang J.C."/>
            <person name="Janbon G."/>
            <person name="Jones S.J.M."/>
            <person name="Koo H.L."/>
            <person name="Krzywinski M.I."/>
            <person name="Kwon-Chung K.J."/>
            <person name="Lengeler K.B."/>
            <person name="Maiti R."/>
            <person name="Marra M.A."/>
            <person name="Marra R.E."/>
            <person name="Mathewson C.A."/>
            <person name="Mitchell T.G."/>
            <person name="Pertea M."/>
            <person name="Riggs F.R."/>
            <person name="Salzberg S.L."/>
            <person name="Schein J.E."/>
            <person name="Shvartsbeyn A."/>
            <person name="Shin H."/>
            <person name="Shumway M."/>
            <person name="Specht C.A."/>
            <person name="Suh B.B."/>
            <person name="Tenney A."/>
            <person name="Utterback T.R."/>
            <person name="Wickes B.L."/>
            <person name="Wortman J.R."/>
            <person name="Wye N.H."/>
            <person name="Kronstad J.W."/>
            <person name="Lodge J.K."/>
            <person name="Heitman J."/>
            <person name="Davis R.W."/>
            <person name="Fraser C.M."/>
            <person name="Hyman R.W."/>
        </authorList>
    </citation>
    <scope>NUCLEOTIDE SEQUENCE [LARGE SCALE GENOMIC DNA]</scope>
    <source>
        <strain>B-3501A</strain>
    </source>
</reference>
<dbReference type="EMBL" id="AAEY01000032">
    <property type="protein sequence ID" value="EAL20118.1"/>
    <property type="molecule type" value="Genomic_DNA"/>
</dbReference>
<dbReference type="RefSeq" id="XP_774765.1">
    <property type="nucleotide sequence ID" value="XM_769672.1"/>
</dbReference>
<dbReference type="SMR" id="P0CM97"/>
<dbReference type="EnsemblFungi" id="AAW44142">
    <property type="protein sequence ID" value="AAW44142"/>
    <property type="gene ID" value="CNF00260"/>
</dbReference>
<dbReference type="GeneID" id="4936996"/>
<dbReference type="KEGG" id="cnb:CNBF4440"/>
<dbReference type="VEuPathDB" id="FungiDB:CNBF4440"/>
<dbReference type="HOGENOM" id="CLU_006308_0_0_1"/>
<dbReference type="OrthoDB" id="8505at5206"/>
<dbReference type="GO" id="GO:0071013">
    <property type="term" value="C:catalytic step 2 spliceosome"/>
    <property type="evidence" value="ECO:0007669"/>
    <property type="project" value="TreeGrafter"/>
</dbReference>
<dbReference type="GO" id="GO:0005737">
    <property type="term" value="C:cytoplasm"/>
    <property type="evidence" value="ECO:0007669"/>
    <property type="project" value="UniProtKB-SubCell"/>
</dbReference>
<dbReference type="GO" id="GO:0003723">
    <property type="term" value="F:RNA binding"/>
    <property type="evidence" value="ECO:0007669"/>
    <property type="project" value="InterPro"/>
</dbReference>
<dbReference type="GO" id="GO:0000398">
    <property type="term" value="P:mRNA splicing, via spliceosome"/>
    <property type="evidence" value="ECO:0007669"/>
    <property type="project" value="TreeGrafter"/>
</dbReference>
<dbReference type="FunFam" id="1.25.40.180:FF:000004">
    <property type="entry name" value="pre-mRNA-splicing factor CWC22 homolog"/>
    <property type="match status" value="1"/>
</dbReference>
<dbReference type="Gene3D" id="1.25.40.180">
    <property type="match status" value="2"/>
</dbReference>
<dbReference type="InterPro" id="IPR016024">
    <property type="entry name" value="ARM-type_fold"/>
</dbReference>
<dbReference type="InterPro" id="IPR050781">
    <property type="entry name" value="CWC22_splicing_factor"/>
</dbReference>
<dbReference type="InterPro" id="IPR003891">
    <property type="entry name" value="Initiation_fac_eIF4g_MI"/>
</dbReference>
<dbReference type="InterPro" id="IPR003890">
    <property type="entry name" value="MIF4G-like_typ-3"/>
</dbReference>
<dbReference type="PANTHER" id="PTHR18034">
    <property type="entry name" value="CELL CYCLE CONTROL PROTEIN CWF22-RELATED"/>
    <property type="match status" value="1"/>
</dbReference>
<dbReference type="PANTHER" id="PTHR18034:SF3">
    <property type="entry name" value="PRE-MRNA-SPLICING FACTOR CWC22 HOMOLOG"/>
    <property type="match status" value="1"/>
</dbReference>
<dbReference type="Pfam" id="PF02847">
    <property type="entry name" value="MA3"/>
    <property type="match status" value="1"/>
</dbReference>
<dbReference type="Pfam" id="PF02854">
    <property type="entry name" value="MIF4G"/>
    <property type="match status" value="1"/>
</dbReference>
<dbReference type="SMART" id="SM00544">
    <property type="entry name" value="MA3"/>
    <property type="match status" value="1"/>
</dbReference>
<dbReference type="SMART" id="SM00543">
    <property type="entry name" value="MIF4G"/>
    <property type="match status" value="1"/>
</dbReference>
<dbReference type="SUPFAM" id="SSF48371">
    <property type="entry name" value="ARM repeat"/>
    <property type="match status" value="1"/>
</dbReference>
<dbReference type="PROSITE" id="PS51366">
    <property type="entry name" value="MI"/>
    <property type="match status" value="1"/>
</dbReference>
<organism>
    <name type="scientific">Cryptococcus neoformans var. neoformans serotype D (strain B-3501A)</name>
    <name type="common">Filobasidiella neoformans</name>
    <dbReference type="NCBI Taxonomy" id="283643"/>
    <lineage>
        <taxon>Eukaryota</taxon>
        <taxon>Fungi</taxon>
        <taxon>Dikarya</taxon>
        <taxon>Basidiomycota</taxon>
        <taxon>Agaricomycotina</taxon>
        <taxon>Tremellomycetes</taxon>
        <taxon>Tremellales</taxon>
        <taxon>Cryptococcaceae</taxon>
        <taxon>Cryptococcus</taxon>
        <taxon>Cryptococcus neoformans species complex</taxon>
    </lineage>
</organism>
<gene>
    <name type="primary">CWC22</name>
    <name type="ordered locus">CNBF4440</name>
</gene>
<feature type="chain" id="PRO_0000410052" description="Pre-mRNA-splicing factor CWC22">
    <location>
        <begin position="1"/>
        <end position="831"/>
    </location>
</feature>
<feature type="domain" description="MIF4G" evidence="2">
    <location>
        <begin position="174"/>
        <end position="357"/>
    </location>
</feature>
<feature type="domain" description="MI" evidence="2">
    <location>
        <begin position="460"/>
        <end position="576"/>
    </location>
</feature>
<feature type="region of interest" description="Disordered" evidence="3">
    <location>
        <begin position="1"/>
        <end position="89"/>
    </location>
</feature>
<feature type="region of interest" description="Disordered" evidence="3">
    <location>
        <begin position="414"/>
        <end position="450"/>
    </location>
</feature>
<feature type="region of interest" description="Disordered" evidence="3">
    <location>
        <begin position="670"/>
        <end position="831"/>
    </location>
</feature>
<feature type="compositionally biased region" description="Low complexity" evidence="3">
    <location>
        <begin position="1"/>
        <end position="17"/>
    </location>
</feature>
<feature type="compositionally biased region" description="Basic and acidic residues" evidence="3">
    <location>
        <begin position="73"/>
        <end position="89"/>
    </location>
</feature>
<feature type="compositionally biased region" description="Acidic residues" evidence="3">
    <location>
        <begin position="433"/>
        <end position="443"/>
    </location>
</feature>
<name>CWC22_CRYNB</name>
<keyword id="KW-0963">Cytoplasm</keyword>
<keyword id="KW-0507">mRNA processing</keyword>
<keyword id="KW-0508">mRNA splicing</keyword>
<keyword id="KW-0539">Nucleus</keyword>
<keyword id="KW-0747">Spliceosome</keyword>
<accession>P0CM97</accession>
<accession>Q55Q93</accession>
<accession>Q5KFX4</accession>
<proteinExistence type="inferred from homology"/>
<sequence>MPRSLSRSVSPRPRSPSLSPPRPDSRSSRGRSLTPDDIPAYKRKRSPSPNPRDRPASPPTRRRRSQSPYRNSNRAEIDRPNVKDIDPNRRRARENALLEKQINMALADDGDADGTVATTKKSADEIARAEFAKLLGSRSGGAYIPPAKLRAMQAEAAKDKTSAEYQRISWDALKKSINGLINKVNISNIKHIVPELFGENLIRGRGLFARSVMRAQASSLPFTPVFAALVAIINTKLPQVGELVLIRLISQFRRAYKRNDKTVCHATSTFIAHLCNQYVAHEIVALQILLLCLDRPTDDSIEVAVGFMREVGQFLSENSPKANNTVFERFRAVLHEGQISKRCQYMIEVLFQVRKDKYKDNPAVPEGLDLVEEEEQITHRVTLDDELQVQESLNLFKADPNFVQNEERYNAIKREILGDSDDESGTESGSEYSESEDDEDEDVAPEKAGIQDMTETNLINLRRTIYLTIMNSLNFEEAVHKLMKVNIPEGREIELCNMVIECCSQERTYSNFYGLIGERFCKLHRIWTDAFQEAFQKYYDTIHRYETNKLRNIGRFFGHLLASDGISWAVLHVVHMNEEETTSSSRIFVKIVLQEMVEEMGINRVAERFRIPDLKPAFAGMFPMDNPKNARFSINYFTSIGMGKVTEDMREYLQNAPKLLAAQQAALAAAESSDSDTDSSSDISSSSDSDSDTDSDASSYSRRSRRRRYSSDSRSPPPQRRRYSSDSRSPSPPPRRRQYSDEPRSPSPPPRRRRYSDDSRSPSPPPRRRYSGDSRSPSPPPRRRYADDSRSPSPPPHRRRYSDDSRSPSPPPRRRRYSDNSRSPSPPPRRR</sequence>
<comment type="function">
    <text evidence="1">Involved in pre-mRNA splicing.</text>
</comment>
<comment type="subunit">
    <text evidence="1">Associated with the spliceosome.</text>
</comment>
<comment type="subcellular location">
    <subcellularLocation>
        <location evidence="1">Cytoplasm</location>
    </subcellularLocation>
    <subcellularLocation>
        <location evidence="1">Nucleus</location>
    </subcellularLocation>
</comment>
<comment type="similarity">
    <text evidence="4">Belongs to the CWC22 family.</text>
</comment>
<protein>
    <recommendedName>
        <fullName>Pre-mRNA-splicing factor CWC22</fullName>
    </recommendedName>
</protein>